<keyword id="KW-0227">DNA damage</keyword>
<keyword id="KW-0234">DNA repair</keyword>
<keyword id="KW-1185">Reference proteome</keyword>
<comment type="function">
    <text evidence="1">This protein is involved in the repair of mismatches in DNA. It is required for dam-dependent methyl-directed DNA mismatch repair. May act as a 'molecular matchmaker', a protein that promotes the formation of a stable complex between two or more DNA-binding proteins in an ATP-dependent manner without itself being part of a final effector complex.</text>
</comment>
<comment type="similarity">
    <text evidence="1">Belongs to the DNA mismatch repair MutL/HexB family.</text>
</comment>
<proteinExistence type="inferred from homology"/>
<organism>
    <name type="scientific">Opitutus terrae (strain DSM 11246 / JCM 15787 / PB90-1)</name>
    <dbReference type="NCBI Taxonomy" id="452637"/>
    <lineage>
        <taxon>Bacteria</taxon>
        <taxon>Pseudomonadati</taxon>
        <taxon>Verrucomicrobiota</taxon>
        <taxon>Opitutia</taxon>
        <taxon>Opitutales</taxon>
        <taxon>Opitutaceae</taxon>
        <taxon>Opitutus</taxon>
    </lineage>
</organism>
<dbReference type="EMBL" id="CP001032">
    <property type="protein sequence ID" value="ACB77318.1"/>
    <property type="molecule type" value="Genomic_DNA"/>
</dbReference>
<dbReference type="RefSeq" id="WP_012376846.1">
    <property type="nucleotide sequence ID" value="NC_010571.1"/>
</dbReference>
<dbReference type="SMR" id="B1ZZY2"/>
<dbReference type="STRING" id="452637.Oter_4044"/>
<dbReference type="KEGG" id="ote:Oter_4044"/>
<dbReference type="eggNOG" id="COG0323">
    <property type="taxonomic scope" value="Bacteria"/>
</dbReference>
<dbReference type="eggNOG" id="COG3170">
    <property type="taxonomic scope" value="Bacteria"/>
</dbReference>
<dbReference type="HOGENOM" id="CLU_004131_4_2_0"/>
<dbReference type="OrthoDB" id="9763467at2"/>
<dbReference type="Proteomes" id="UP000007013">
    <property type="component" value="Chromosome"/>
</dbReference>
<dbReference type="GO" id="GO:0032300">
    <property type="term" value="C:mismatch repair complex"/>
    <property type="evidence" value="ECO:0007669"/>
    <property type="project" value="InterPro"/>
</dbReference>
<dbReference type="GO" id="GO:0005524">
    <property type="term" value="F:ATP binding"/>
    <property type="evidence" value="ECO:0007669"/>
    <property type="project" value="InterPro"/>
</dbReference>
<dbReference type="GO" id="GO:0016887">
    <property type="term" value="F:ATP hydrolysis activity"/>
    <property type="evidence" value="ECO:0007669"/>
    <property type="project" value="InterPro"/>
</dbReference>
<dbReference type="GO" id="GO:0140664">
    <property type="term" value="F:ATP-dependent DNA damage sensor activity"/>
    <property type="evidence" value="ECO:0007669"/>
    <property type="project" value="InterPro"/>
</dbReference>
<dbReference type="GO" id="GO:0030983">
    <property type="term" value="F:mismatched DNA binding"/>
    <property type="evidence" value="ECO:0007669"/>
    <property type="project" value="InterPro"/>
</dbReference>
<dbReference type="GO" id="GO:0006298">
    <property type="term" value="P:mismatch repair"/>
    <property type="evidence" value="ECO:0007669"/>
    <property type="project" value="UniProtKB-UniRule"/>
</dbReference>
<dbReference type="CDD" id="cd16926">
    <property type="entry name" value="HATPase_MutL-MLH-PMS-like"/>
    <property type="match status" value="1"/>
</dbReference>
<dbReference type="CDD" id="cd00782">
    <property type="entry name" value="MutL_Trans"/>
    <property type="match status" value="1"/>
</dbReference>
<dbReference type="FunFam" id="3.30.565.10:FF:000003">
    <property type="entry name" value="DNA mismatch repair endonuclease MutL"/>
    <property type="match status" value="1"/>
</dbReference>
<dbReference type="Gene3D" id="3.30.230.10">
    <property type="match status" value="1"/>
</dbReference>
<dbReference type="Gene3D" id="3.30.565.10">
    <property type="entry name" value="Histidine kinase-like ATPase, C-terminal domain"/>
    <property type="match status" value="1"/>
</dbReference>
<dbReference type="Gene3D" id="3.30.1540.20">
    <property type="entry name" value="MutL, C-terminal domain, dimerisation subdomain"/>
    <property type="match status" value="1"/>
</dbReference>
<dbReference type="Gene3D" id="3.30.1370.100">
    <property type="entry name" value="MutL, C-terminal domain, regulatory subdomain"/>
    <property type="match status" value="1"/>
</dbReference>
<dbReference type="HAMAP" id="MF_00149">
    <property type="entry name" value="DNA_mis_repair"/>
    <property type="match status" value="1"/>
</dbReference>
<dbReference type="InterPro" id="IPR014762">
    <property type="entry name" value="DNA_mismatch_repair_CS"/>
</dbReference>
<dbReference type="InterPro" id="IPR020667">
    <property type="entry name" value="DNA_mismatch_repair_MutL"/>
</dbReference>
<dbReference type="InterPro" id="IPR013507">
    <property type="entry name" value="DNA_mismatch_S5_2-like"/>
</dbReference>
<dbReference type="InterPro" id="IPR036890">
    <property type="entry name" value="HATPase_C_sf"/>
</dbReference>
<dbReference type="InterPro" id="IPR002099">
    <property type="entry name" value="MutL/Mlh/PMS"/>
</dbReference>
<dbReference type="InterPro" id="IPR038973">
    <property type="entry name" value="MutL/Mlh/Pms-like"/>
</dbReference>
<dbReference type="InterPro" id="IPR014790">
    <property type="entry name" value="MutL_C"/>
</dbReference>
<dbReference type="InterPro" id="IPR042120">
    <property type="entry name" value="MutL_C_dimsub"/>
</dbReference>
<dbReference type="InterPro" id="IPR042121">
    <property type="entry name" value="MutL_C_regsub"/>
</dbReference>
<dbReference type="InterPro" id="IPR037198">
    <property type="entry name" value="MutL_C_sf"/>
</dbReference>
<dbReference type="InterPro" id="IPR020568">
    <property type="entry name" value="Ribosomal_Su5_D2-typ_SF"/>
</dbReference>
<dbReference type="InterPro" id="IPR014721">
    <property type="entry name" value="Ribsml_uS5_D2-typ_fold_subgr"/>
</dbReference>
<dbReference type="NCBIfam" id="TIGR00585">
    <property type="entry name" value="mutl"/>
    <property type="match status" value="1"/>
</dbReference>
<dbReference type="PANTHER" id="PTHR10073">
    <property type="entry name" value="DNA MISMATCH REPAIR PROTEIN MLH, PMS, MUTL"/>
    <property type="match status" value="1"/>
</dbReference>
<dbReference type="PANTHER" id="PTHR10073:SF12">
    <property type="entry name" value="DNA MISMATCH REPAIR PROTEIN MLH1"/>
    <property type="match status" value="1"/>
</dbReference>
<dbReference type="Pfam" id="PF01119">
    <property type="entry name" value="DNA_mis_repair"/>
    <property type="match status" value="1"/>
</dbReference>
<dbReference type="Pfam" id="PF13589">
    <property type="entry name" value="HATPase_c_3"/>
    <property type="match status" value="1"/>
</dbReference>
<dbReference type="Pfam" id="PF08676">
    <property type="entry name" value="MutL_C"/>
    <property type="match status" value="1"/>
</dbReference>
<dbReference type="SMART" id="SM01340">
    <property type="entry name" value="DNA_mis_repair"/>
    <property type="match status" value="1"/>
</dbReference>
<dbReference type="SMART" id="SM00853">
    <property type="entry name" value="MutL_C"/>
    <property type="match status" value="1"/>
</dbReference>
<dbReference type="SUPFAM" id="SSF55874">
    <property type="entry name" value="ATPase domain of HSP90 chaperone/DNA topoisomerase II/histidine kinase"/>
    <property type="match status" value="1"/>
</dbReference>
<dbReference type="SUPFAM" id="SSF118116">
    <property type="entry name" value="DNA mismatch repair protein MutL"/>
    <property type="match status" value="1"/>
</dbReference>
<dbReference type="SUPFAM" id="SSF54211">
    <property type="entry name" value="Ribosomal protein S5 domain 2-like"/>
    <property type="match status" value="1"/>
</dbReference>
<dbReference type="PROSITE" id="PS00058">
    <property type="entry name" value="DNA_MISMATCH_REPAIR_1"/>
    <property type="match status" value="1"/>
</dbReference>
<protein>
    <recommendedName>
        <fullName evidence="1">DNA mismatch repair protein MutL</fullName>
    </recommendedName>
</protein>
<reference key="1">
    <citation type="journal article" date="2011" name="J. Bacteriol.">
        <title>Genome sequence of the verrucomicrobium Opitutus terrae PB90-1, an abundant inhabitant of rice paddy soil ecosystems.</title>
        <authorList>
            <person name="van Passel M.W."/>
            <person name="Kant R."/>
            <person name="Palva A."/>
            <person name="Copeland A."/>
            <person name="Lucas S."/>
            <person name="Lapidus A."/>
            <person name="Glavina del Rio T."/>
            <person name="Pitluck S."/>
            <person name="Goltsman E."/>
            <person name="Clum A."/>
            <person name="Sun H."/>
            <person name="Schmutz J."/>
            <person name="Larimer F.W."/>
            <person name="Land M.L."/>
            <person name="Hauser L."/>
            <person name="Kyrpides N."/>
            <person name="Mikhailova N."/>
            <person name="Richardson P.P."/>
            <person name="Janssen P.H."/>
            <person name="de Vos W.M."/>
            <person name="Smidt H."/>
        </authorList>
    </citation>
    <scope>NUCLEOTIDE SEQUENCE [LARGE SCALE GENOMIC DNA]</scope>
    <source>
        <strain>DSM 11246 / JCM 15787 / PB90-1</strain>
    </source>
</reference>
<gene>
    <name evidence="1" type="primary">mutL</name>
    <name type="ordered locus">Oter_4044</name>
</gene>
<feature type="chain" id="PRO_1000096669" description="DNA mismatch repair protein MutL">
    <location>
        <begin position="1"/>
        <end position="628"/>
    </location>
</feature>
<feature type="region of interest" description="Disordered" evidence="2">
    <location>
        <begin position="334"/>
        <end position="367"/>
    </location>
</feature>
<feature type="compositionally biased region" description="Basic and acidic residues" evidence="2">
    <location>
        <begin position="357"/>
        <end position="367"/>
    </location>
</feature>
<sequence length="628" mass="68500">MAKVRILSDRVANQIAAGEVIERPAAVVKELVENALDAGATRIEVEFRHGGRSLMRVEDNGSGMSRDDALLALERHATSKISEAADLDRLGSYGFRGEALPSIASVSRFELQTREAGQNVGTEVLVSGGKLVHVRDCGRPVGTRIEVAQLFNSVPARRKFLKSDQTEAAHIVQCVRLYALACPGTAFSLIEDGRVIFRSPECPTLAERIAEIFGRQTAESLVPIESVESGMRLGGLIGRPGVGRGTRHEMIVFVNQRPVDSRTLNYALIESYYESVPKGRYPLAFVFFECDPAAVDVNVHPAKREVRFRNEPAVRSFVIRSVLQRLREIADHRSDFAQPSADNMPKPESPGAPAAHGRKDDAPAAHAEGRAATPLAAGNLIVTARFGAESTPYLEKSGAIAGARPAGVLPPAVPRIPAAPMPVNAGAAAVPAPLKPASPSWRFVGLAHGNYALFETTAGLILLDRRAAHERVWFERLQEQFRSGAVPSQRLLLPVPVELDPIAAALLLDRVQFLNAHGFEIAEFGRNFFRIEAVPAWMEPADAEPFLRDLLGAFREGHWPDRDANLAREELARLASVKAVRLPAVTGEQELRALVTHLFATRTPMTNPAGRPTYIELNHAELARRFQK</sequence>
<evidence type="ECO:0000255" key="1">
    <source>
        <dbReference type="HAMAP-Rule" id="MF_00149"/>
    </source>
</evidence>
<evidence type="ECO:0000256" key="2">
    <source>
        <dbReference type="SAM" id="MobiDB-lite"/>
    </source>
</evidence>
<accession>B1ZZY2</accession>
<name>MUTL_OPITP</name>